<comment type="function">
    <text evidence="3">Proton-selective ion channel. Biphasically modulated by acid and alkali, mediating proton influx and efflux in response to extracellular acid and base stimulation, respectively. Sour taste receptor, which carries inward currents in response to extracellular acidification. Sensor for ammonium chloride (NH(4)Cl) in taste receptor cells. NH(4)Cl acts by increasing the intracellular pH, thereby generating a driving force for proton entry through OTOP1 channel. Might also participate in alkaline sensation. Plays a role in the regulation of Ca(2+) flux in response to purigenic (ATP, ADP and UDP) stimuli, leading to increase in cytosolic Ca(2+) due to influx of extracellular calcium. May play this role by inhibiting P2Y purinoceptor-mediated Ca(2+) release in a Ca(2+)-dependent manner and promote an influx of Ca(2+) in response to ATP. Through this mechanism and possibly others, plays a role in the formation and function of calcium carbonate-based structures in the vestibular system of the inner ear, called otoconia, that sense gravity and linear acceleration. In obesity, may attenuate adipose tissue inflammation, through the negative regulation of IFNG signaling, hence may play an adaptive role in the maintainance of metabolic homeostasis. Following alkali activation, may also be permeable Na(+), K(+), Cs(+) and Li(+).</text>
</comment>
<comment type="catalytic activity">
    <reaction evidence="1">
        <text>H(+)(in) = H(+)(out)</text>
        <dbReference type="Rhea" id="RHEA:34979"/>
        <dbReference type="ChEBI" id="CHEBI:15378"/>
    </reaction>
</comment>
<comment type="activity regulation">
    <text evidence="3">Activated by both acid and alkali, with proton influx in response to extracellular acid and proton efflux during alkali stimulation. Inhibited by Zn(2+); this inhibition is thought to be pH-sensitive. Currents evoked in response to mild acid (pH 6.0) stimulus may also be mildly potentiated by exposure to Zn(2+). Activated by NH(4)Cl.</text>
</comment>
<comment type="subunit">
    <text evidence="2 3">Homodimer (By similarity). Interacts with STAT1, independently of STAT1 phosphorylation status (By similarity).</text>
</comment>
<comment type="subcellular location">
    <subcellularLocation>
        <location evidence="3">Cell membrane</location>
        <topology evidence="2">Multi-pass membrane protein</topology>
    </subcellularLocation>
    <subcellularLocation>
        <location evidence="3">Cell projection</location>
        <location evidence="3">Microvillus</location>
    </subcellularLocation>
    <text evidence="3">Found in the gelatinous membrane overlying the inner ear macular epithelium. Also detected in the apical microvilli in inner ear supporting cells.</text>
</comment>
<comment type="domain">
    <text evidence="3">Residues involved in the gating by extracellular Zn (2+) and pH are located in the extracellular loops between transmembrane domain 5-6 and transmembrane domain 11-12.</text>
</comment>
<comment type="similarity">
    <text evidence="7">Belongs to the otopetrin family.</text>
</comment>
<accession>Q7M734</accession>
<protein>
    <recommendedName>
        <fullName evidence="7">Proton channel OTOP1</fullName>
    </recommendedName>
    <alternativeName>
        <fullName evidence="6">Otopetrin-1</fullName>
    </alternativeName>
</protein>
<reference key="1">
    <citation type="journal article" date="2004" name="Nature">
        <title>Genome sequence of the Brown Norway rat yields insights into mammalian evolution.</title>
        <authorList>
            <person name="Gibbs R.A."/>
            <person name="Weinstock G.M."/>
            <person name="Metzker M.L."/>
            <person name="Muzny D.M."/>
            <person name="Sodergren E.J."/>
            <person name="Scherer S."/>
            <person name="Scott G."/>
            <person name="Steffen D."/>
            <person name="Worley K.C."/>
            <person name="Burch P.E."/>
            <person name="Okwuonu G."/>
            <person name="Hines S."/>
            <person name="Lewis L."/>
            <person name="Deramo C."/>
            <person name="Delgado O."/>
            <person name="Dugan-Rocha S."/>
            <person name="Miner G."/>
            <person name="Morgan M."/>
            <person name="Hawes A."/>
            <person name="Gill R."/>
            <person name="Holt R.A."/>
            <person name="Adams M.D."/>
            <person name="Amanatides P.G."/>
            <person name="Baden-Tillson H."/>
            <person name="Barnstead M."/>
            <person name="Chin S."/>
            <person name="Evans C.A."/>
            <person name="Ferriera S."/>
            <person name="Fosler C."/>
            <person name="Glodek A."/>
            <person name="Gu Z."/>
            <person name="Jennings D."/>
            <person name="Kraft C.L."/>
            <person name="Nguyen T."/>
            <person name="Pfannkoch C.M."/>
            <person name="Sitter C."/>
            <person name="Sutton G.G."/>
            <person name="Venter J.C."/>
            <person name="Woodage T."/>
            <person name="Smith D."/>
            <person name="Lee H.-M."/>
            <person name="Gustafson E."/>
            <person name="Cahill P."/>
            <person name="Kana A."/>
            <person name="Doucette-Stamm L."/>
            <person name="Weinstock K."/>
            <person name="Fechtel K."/>
            <person name="Weiss R.B."/>
            <person name="Dunn D.M."/>
            <person name="Green E.D."/>
            <person name="Blakesley R.W."/>
            <person name="Bouffard G.G."/>
            <person name="De Jong P.J."/>
            <person name="Osoegawa K."/>
            <person name="Zhu B."/>
            <person name="Marra M."/>
            <person name="Schein J."/>
            <person name="Bosdet I."/>
            <person name="Fjell C."/>
            <person name="Jones S."/>
            <person name="Krzywinski M."/>
            <person name="Mathewson C."/>
            <person name="Siddiqui A."/>
            <person name="Wye N."/>
            <person name="McPherson J."/>
            <person name="Zhao S."/>
            <person name="Fraser C.M."/>
            <person name="Shetty J."/>
            <person name="Shatsman S."/>
            <person name="Geer K."/>
            <person name="Chen Y."/>
            <person name="Abramzon S."/>
            <person name="Nierman W.C."/>
            <person name="Havlak P.H."/>
            <person name="Chen R."/>
            <person name="Durbin K.J."/>
            <person name="Egan A."/>
            <person name="Ren Y."/>
            <person name="Song X.-Z."/>
            <person name="Li B."/>
            <person name="Liu Y."/>
            <person name="Qin X."/>
            <person name="Cawley S."/>
            <person name="Cooney A.J."/>
            <person name="D'Souza L.M."/>
            <person name="Martin K."/>
            <person name="Wu J.Q."/>
            <person name="Gonzalez-Garay M.L."/>
            <person name="Jackson A.R."/>
            <person name="Kalafus K.J."/>
            <person name="McLeod M.P."/>
            <person name="Milosavljevic A."/>
            <person name="Virk D."/>
            <person name="Volkov A."/>
            <person name="Wheeler D.A."/>
            <person name="Zhang Z."/>
            <person name="Bailey J.A."/>
            <person name="Eichler E.E."/>
            <person name="Tuzun E."/>
            <person name="Birney E."/>
            <person name="Mongin E."/>
            <person name="Ureta-Vidal A."/>
            <person name="Woodwark C."/>
            <person name="Zdobnov E."/>
            <person name="Bork P."/>
            <person name="Suyama M."/>
            <person name="Torrents D."/>
            <person name="Alexandersson M."/>
            <person name="Trask B.J."/>
            <person name="Young J.M."/>
            <person name="Huang H."/>
            <person name="Wang H."/>
            <person name="Xing H."/>
            <person name="Daniels S."/>
            <person name="Gietzen D."/>
            <person name="Schmidt J."/>
            <person name="Stevens K."/>
            <person name="Vitt U."/>
            <person name="Wingrove J."/>
            <person name="Camara F."/>
            <person name="Mar Alba M."/>
            <person name="Abril J.F."/>
            <person name="Guigo R."/>
            <person name="Smit A."/>
            <person name="Dubchak I."/>
            <person name="Rubin E.M."/>
            <person name="Couronne O."/>
            <person name="Poliakov A."/>
            <person name="Huebner N."/>
            <person name="Ganten D."/>
            <person name="Goesele C."/>
            <person name="Hummel O."/>
            <person name="Kreitler T."/>
            <person name="Lee Y.-A."/>
            <person name="Monti J."/>
            <person name="Schulz H."/>
            <person name="Zimdahl H."/>
            <person name="Himmelbauer H."/>
            <person name="Lehrach H."/>
            <person name="Jacob H.J."/>
            <person name="Bromberg S."/>
            <person name="Gullings-Handley J."/>
            <person name="Jensen-Seaman M.I."/>
            <person name="Kwitek A.E."/>
            <person name="Lazar J."/>
            <person name="Pasko D."/>
            <person name="Tonellato P.J."/>
            <person name="Twigger S."/>
            <person name="Ponting C.P."/>
            <person name="Duarte J.M."/>
            <person name="Rice S."/>
            <person name="Goodstadt L."/>
            <person name="Beatson S.A."/>
            <person name="Emes R.D."/>
            <person name="Winter E.E."/>
            <person name="Webber C."/>
            <person name="Brandt P."/>
            <person name="Nyakatura G."/>
            <person name="Adetobi M."/>
            <person name="Chiaromonte F."/>
            <person name="Elnitski L."/>
            <person name="Eswara P."/>
            <person name="Hardison R.C."/>
            <person name="Hou M."/>
            <person name="Kolbe D."/>
            <person name="Makova K."/>
            <person name="Miller W."/>
            <person name="Nekrutenko A."/>
            <person name="Riemer C."/>
            <person name="Schwartz S."/>
            <person name="Taylor J."/>
            <person name="Yang S."/>
            <person name="Zhang Y."/>
            <person name="Lindpaintner K."/>
            <person name="Andrews T.D."/>
            <person name="Caccamo M."/>
            <person name="Clamp M."/>
            <person name="Clarke L."/>
            <person name="Curwen V."/>
            <person name="Durbin R.M."/>
            <person name="Eyras E."/>
            <person name="Searle S.M."/>
            <person name="Cooper G.M."/>
            <person name="Batzoglou S."/>
            <person name="Brudno M."/>
            <person name="Sidow A."/>
            <person name="Stone E.A."/>
            <person name="Payseur B.A."/>
            <person name="Bourque G."/>
            <person name="Lopez-Otin C."/>
            <person name="Puente X.S."/>
            <person name="Chakrabarti K."/>
            <person name="Chatterji S."/>
            <person name="Dewey C."/>
            <person name="Pachter L."/>
            <person name="Bray N."/>
            <person name="Yap V.B."/>
            <person name="Caspi A."/>
            <person name="Tesler G."/>
            <person name="Pevzner P.A."/>
            <person name="Haussler D."/>
            <person name="Roskin K.M."/>
            <person name="Baertsch R."/>
            <person name="Clawson H."/>
            <person name="Furey T.S."/>
            <person name="Hinrichs A.S."/>
            <person name="Karolchik D."/>
            <person name="Kent W.J."/>
            <person name="Rosenbloom K.R."/>
            <person name="Trumbower H."/>
            <person name="Weirauch M."/>
            <person name="Cooper D.N."/>
            <person name="Stenson P.D."/>
            <person name="Ma B."/>
            <person name="Brent M."/>
            <person name="Arumugam M."/>
            <person name="Shteynberg D."/>
            <person name="Copley R.R."/>
            <person name="Taylor M.S."/>
            <person name="Riethman H."/>
            <person name="Mudunuri U."/>
            <person name="Peterson J."/>
            <person name="Guyer M."/>
            <person name="Felsenfeld A."/>
            <person name="Old S."/>
            <person name="Mockrin S."/>
            <person name="Collins F.S."/>
        </authorList>
    </citation>
    <scope>NUCLEOTIDE SEQUENCE [LARGE SCALE GENOMIC DNA]</scope>
    <source>
        <strain>Brown Norway</strain>
    </source>
</reference>
<reference key="2">
    <citation type="journal article" date="2003" name="Hum. Mol. Genet.">
        <title>Non-syndromic vestibular disorder with otoconial agenesis in tilted/mergulhador mice caused by mutations in otopetrin 1.</title>
        <authorList>
            <person name="Hurle B."/>
            <person name="Ignatova E."/>
            <person name="Massironi S.M."/>
            <person name="Mashimo T."/>
            <person name="Rios X."/>
            <person name="Thalmann I."/>
            <person name="Thalmann R."/>
            <person name="Ornitz D.M."/>
        </authorList>
    </citation>
    <scope>IDENTIFICATION</scope>
</reference>
<organism>
    <name type="scientific">Rattus norvegicus</name>
    <name type="common">Rat</name>
    <dbReference type="NCBI Taxonomy" id="10116"/>
    <lineage>
        <taxon>Eukaryota</taxon>
        <taxon>Metazoa</taxon>
        <taxon>Chordata</taxon>
        <taxon>Craniata</taxon>
        <taxon>Vertebrata</taxon>
        <taxon>Euteleostomi</taxon>
        <taxon>Mammalia</taxon>
        <taxon>Eutheria</taxon>
        <taxon>Euarchontoglires</taxon>
        <taxon>Glires</taxon>
        <taxon>Rodentia</taxon>
        <taxon>Myomorpha</taxon>
        <taxon>Muroidea</taxon>
        <taxon>Muridae</taxon>
        <taxon>Murinae</taxon>
        <taxon>Rattus</taxon>
    </lineage>
</organism>
<name>OTOP1_RAT</name>
<feature type="chain" id="PRO_0000313818" description="Proton channel OTOP1">
    <location>
        <begin position="1"/>
        <end position="600"/>
    </location>
</feature>
<feature type="topological domain" description="Cytoplasmic" evidence="7">
    <location>
        <begin position="1"/>
        <end position="56"/>
    </location>
</feature>
<feature type="transmembrane region" description="Helical; Name=1" evidence="2 4">
    <location>
        <begin position="57"/>
        <end position="78"/>
    </location>
</feature>
<feature type="topological domain" description="Extracellular" evidence="7">
    <location>
        <begin position="79"/>
        <end position="86"/>
    </location>
</feature>
<feature type="transmembrane region" description="Helical; Name=2" evidence="2">
    <location>
        <begin position="87"/>
        <end position="110"/>
    </location>
</feature>
<feature type="topological domain" description="Cytoplasmic" evidence="7">
    <location>
        <begin position="111"/>
        <end position="128"/>
    </location>
</feature>
<feature type="transmembrane region" description="Helical; Name=3" evidence="2">
    <location>
        <begin position="129"/>
        <end position="151"/>
    </location>
</feature>
<feature type="topological domain" description="Extracellular" evidence="7">
    <location>
        <begin position="152"/>
        <end position="161"/>
    </location>
</feature>
<feature type="transmembrane region" description="Helical; Name=4" evidence="2">
    <location>
        <begin position="162"/>
        <end position="186"/>
    </location>
</feature>
<feature type="topological domain" description="Cytoplasmic" evidence="7">
    <location>
        <begin position="187"/>
        <end position="194"/>
    </location>
</feature>
<feature type="transmembrane region" description="Helical; Name=5" evidence="2">
    <location>
        <begin position="195"/>
        <end position="221"/>
    </location>
</feature>
<feature type="topological domain" description="Extracellular" evidence="7">
    <location>
        <begin position="222"/>
        <end position="262"/>
    </location>
</feature>
<feature type="transmembrane region" description="Helical; Name=6" evidence="2">
    <location>
        <begin position="263"/>
        <end position="288"/>
    </location>
</feature>
<feature type="topological domain" description="Cytoplasmic" evidence="7">
    <location>
        <begin position="289"/>
        <end position="309"/>
    </location>
</feature>
<feature type="transmembrane region" description="Helical; Name=7" evidence="2">
    <location>
        <begin position="310"/>
        <end position="332"/>
    </location>
</feature>
<feature type="topological domain" description="Extracellular" evidence="7">
    <location>
        <begin position="333"/>
        <end position="342"/>
    </location>
</feature>
<feature type="transmembrane region" description="Helical; Name=8" evidence="2">
    <location>
        <begin position="343"/>
        <end position="368"/>
    </location>
</feature>
<feature type="topological domain" description="Cytoplasmic" evidence="7">
    <location>
        <begin position="369"/>
        <end position="386"/>
    </location>
</feature>
<feature type="transmembrane region" description="Helical; Name=9" evidence="2">
    <location>
        <begin position="387"/>
        <end position="411"/>
    </location>
</feature>
<feature type="topological domain" description="Extracellular" evidence="7">
    <location>
        <begin position="412"/>
        <end position="421"/>
    </location>
</feature>
<feature type="transmembrane region" description="Helical; Name=10" evidence="2">
    <location>
        <begin position="422"/>
        <end position="442"/>
    </location>
</feature>
<feature type="topological domain" description="Cytoplasmic" evidence="7">
    <location>
        <begin position="443"/>
        <end position="532"/>
    </location>
</feature>
<feature type="transmembrane region" description="Helical; Name=11" evidence="2">
    <location>
        <begin position="533"/>
        <end position="551"/>
    </location>
</feature>
<feature type="topological domain" description="Extracellular" evidence="7">
    <location>
        <begin position="552"/>
        <end position="569"/>
    </location>
</feature>
<feature type="transmembrane region" description="Helical; Name=12" evidence="2">
    <location>
        <begin position="570"/>
        <end position="593"/>
    </location>
</feature>
<feature type="topological domain" description="Cytoplasmic" evidence="7">
    <location>
        <begin position="594"/>
        <end position="600"/>
    </location>
</feature>
<feature type="region of interest" description="Disordered" evidence="5">
    <location>
        <begin position="1"/>
        <end position="50"/>
    </location>
</feature>
<feature type="compositionally biased region" description="Low complexity" evidence="5">
    <location>
        <begin position="7"/>
        <end position="27"/>
    </location>
</feature>
<gene>
    <name evidence="6 8" type="primary">Otop1</name>
</gene>
<evidence type="ECO:0000250" key="1">
    <source>
        <dbReference type="UniProtKB" id="Q7RTM1"/>
    </source>
</evidence>
<evidence type="ECO:0000250" key="2">
    <source>
        <dbReference type="UniProtKB" id="Q7ZWK8"/>
    </source>
</evidence>
<evidence type="ECO:0000250" key="3">
    <source>
        <dbReference type="UniProtKB" id="Q80VM9"/>
    </source>
</evidence>
<evidence type="ECO:0000255" key="4"/>
<evidence type="ECO:0000256" key="5">
    <source>
        <dbReference type="SAM" id="MobiDB-lite"/>
    </source>
</evidence>
<evidence type="ECO:0000303" key="6">
    <source>
    </source>
</evidence>
<evidence type="ECO:0000305" key="7"/>
<evidence type="ECO:0000312" key="8">
    <source>
        <dbReference type="RGD" id="631389"/>
    </source>
</evidence>
<sequence length="600" mass="65929">MPGDRGALSSPAASSGSPSAAPSGIAACPPPPSPLARASPQASGPRRGASVPQKLAETLSSQYGLNVFVAGLLFLLAWAVHATGVGKSDLLCVLTALMLLQLLWMLWYVGRSYMQRRLIRPKDTHAGARWLRGSITLFAFITIVLGCLKVAYFIGFSECLSATEGVFPVTHAVHTLLQVYFLWGHAKDIIMSFKTLERFGVIHSVFTNLLLWANSVLNESKHQLNEHKERLITLGFGNITIVLDDHTPQCNCTPPALCSALSHGIYYLYPFNIEYQILASTMLYVLWKNIGRRVDSSRHQKMQCRFDGVLVGSVLGLTVLAATIAVVVVYMIHIGRSKSKSESALIMFYLYAITVLLLMGAAGLVGSWIYRVDEKSLDESKNPARKLDADLLVATASGSWLLSWGSILAIACAETRPPYTWYNLPYSVLVIVEKYVQNIFIIESVHLEPEGVPEDVRTLRVVTVCSGEAAALAASSLGSQGTAQDGSPAVNGNLHLQQRCEKEDQEADWEGATGTTRCLDFLQGGMKRRLLRNITAFLFLCNISLWIPPAFGCRPEYDNGLEEIVFGFEPWIIVVNLAMPFSIFYRMHAAAALFEVYCKI</sequence>
<dbReference type="EMBL" id="AC099417">
    <property type="status" value="NOT_ANNOTATED_CDS"/>
    <property type="molecule type" value="Genomic_DNA"/>
</dbReference>
<dbReference type="EMBL" id="BK000651">
    <property type="protein sequence ID" value="DAA00899.1"/>
    <property type="molecule type" value="mRNA"/>
</dbReference>
<dbReference type="RefSeq" id="NP_852098.1">
    <property type="nucleotide sequence ID" value="NM_181433.1"/>
</dbReference>
<dbReference type="SMR" id="Q7M734"/>
<dbReference type="FunCoup" id="Q7M734">
    <property type="interactions" value="265"/>
</dbReference>
<dbReference type="STRING" id="10116.ENSRNOP00000047534"/>
<dbReference type="PhosphoSitePlus" id="Q7M734"/>
<dbReference type="PaxDb" id="10116-ENSRNOP00000047534"/>
<dbReference type="Ensembl" id="ENSRNOT00000050367.3">
    <property type="protein sequence ID" value="ENSRNOP00000047534.2"/>
    <property type="gene ID" value="ENSRNOG00000028423.5"/>
</dbReference>
<dbReference type="GeneID" id="305427"/>
<dbReference type="KEGG" id="rno:305427"/>
<dbReference type="AGR" id="RGD:631389"/>
<dbReference type="CTD" id="133060"/>
<dbReference type="RGD" id="631389">
    <property type="gene designation" value="Otop1"/>
</dbReference>
<dbReference type="eggNOG" id="KOG4740">
    <property type="taxonomic scope" value="Eukaryota"/>
</dbReference>
<dbReference type="GeneTree" id="ENSGT00940000159350"/>
<dbReference type="HOGENOM" id="CLU_032913_1_0_1"/>
<dbReference type="InParanoid" id="Q7M734"/>
<dbReference type="OMA" id="HATTCWI"/>
<dbReference type="OrthoDB" id="6429739at2759"/>
<dbReference type="PhylomeDB" id="Q7M734"/>
<dbReference type="TreeFam" id="TF313428"/>
<dbReference type="PRO" id="PR:Q7M734"/>
<dbReference type="Proteomes" id="UP000002494">
    <property type="component" value="Chromosome 14"/>
</dbReference>
<dbReference type="Bgee" id="ENSRNOG00000028423">
    <property type="expression patterns" value="Expressed in thymus and 4 other cell types or tissues"/>
</dbReference>
<dbReference type="GO" id="GO:0016020">
    <property type="term" value="C:membrane"/>
    <property type="evidence" value="ECO:0000266"/>
    <property type="project" value="RGD"/>
</dbReference>
<dbReference type="GO" id="GO:0005902">
    <property type="term" value="C:microvillus"/>
    <property type="evidence" value="ECO:0007669"/>
    <property type="project" value="UniProtKB-SubCell"/>
</dbReference>
<dbReference type="GO" id="GO:0005886">
    <property type="term" value="C:plasma membrane"/>
    <property type="evidence" value="ECO:0000250"/>
    <property type="project" value="UniProtKB"/>
</dbReference>
<dbReference type="GO" id="GO:0042802">
    <property type="term" value="F:identical protein binding"/>
    <property type="evidence" value="ECO:0000250"/>
    <property type="project" value="UniProtKB"/>
</dbReference>
<dbReference type="GO" id="GO:0015252">
    <property type="term" value="F:proton channel activity"/>
    <property type="evidence" value="ECO:0000250"/>
    <property type="project" value="UniProtKB"/>
</dbReference>
<dbReference type="GO" id="GO:0031214">
    <property type="term" value="P:biomineral tissue development"/>
    <property type="evidence" value="ECO:0007669"/>
    <property type="project" value="UniProtKB-KW"/>
</dbReference>
<dbReference type="GO" id="GO:0032869">
    <property type="term" value="P:cellular response to insulin stimulus"/>
    <property type="evidence" value="ECO:0000250"/>
    <property type="project" value="UniProtKB"/>
</dbReference>
<dbReference type="GO" id="GO:0009590">
    <property type="term" value="P:detection of gravity"/>
    <property type="evidence" value="ECO:0000266"/>
    <property type="project" value="RGD"/>
</dbReference>
<dbReference type="GO" id="GO:0042472">
    <property type="term" value="P:inner ear morphogenesis"/>
    <property type="evidence" value="ECO:0000266"/>
    <property type="project" value="RGD"/>
</dbReference>
<dbReference type="GO" id="GO:0060336">
    <property type="term" value="P:negative regulation of type II interferon-mediated signaling pathway"/>
    <property type="evidence" value="ECO:0000250"/>
    <property type="project" value="UniProtKB"/>
</dbReference>
<dbReference type="GO" id="GO:1902600">
    <property type="term" value="P:proton transmembrane transport"/>
    <property type="evidence" value="ECO:0000250"/>
    <property type="project" value="UniProtKB"/>
</dbReference>
<dbReference type="InterPro" id="IPR004878">
    <property type="entry name" value="Otopetrin"/>
</dbReference>
<dbReference type="PANTHER" id="PTHR21522">
    <property type="entry name" value="PROTON CHANNEL OTOP"/>
    <property type="match status" value="1"/>
</dbReference>
<dbReference type="PANTHER" id="PTHR21522:SF19">
    <property type="entry name" value="PROTON CHANNEL OTOP1"/>
    <property type="match status" value="1"/>
</dbReference>
<dbReference type="Pfam" id="PF03189">
    <property type="entry name" value="Otopetrin"/>
    <property type="match status" value="3"/>
</dbReference>
<proteinExistence type="evidence at transcript level"/>
<keyword id="KW-0091">Biomineralization</keyword>
<keyword id="KW-1003">Cell membrane</keyword>
<keyword id="KW-0966">Cell projection</keyword>
<keyword id="KW-0375">Hydrogen ion transport</keyword>
<keyword id="KW-0407">Ion channel</keyword>
<keyword id="KW-0406">Ion transport</keyword>
<keyword id="KW-0472">Membrane</keyword>
<keyword id="KW-1185">Reference proteome</keyword>
<keyword id="KW-0812">Transmembrane</keyword>
<keyword id="KW-1133">Transmembrane helix</keyword>
<keyword id="KW-0813">Transport</keyword>